<keyword id="KW-0007">Acetylation</keyword>
<keyword id="KW-0010">Activator</keyword>
<keyword id="KW-0156">Chromatin regulator</keyword>
<keyword id="KW-1017">Isopeptide bond</keyword>
<keyword id="KW-0539">Nucleus</keyword>
<keyword id="KW-0597">Phosphoprotein</keyword>
<keyword id="KW-1185">Reference proteome</keyword>
<keyword id="KW-0677">Repeat</keyword>
<keyword id="KW-0804">Transcription</keyword>
<keyword id="KW-0805">Transcription regulation</keyword>
<keyword id="KW-0832">Ubl conjugation</keyword>
<name>TRRAP_MOUSE</name>
<organism>
    <name type="scientific">Mus musculus</name>
    <name type="common">Mouse</name>
    <dbReference type="NCBI Taxonomy" id="10090"/>
    <lineage>
        <taxon>Eukaryota</taxon>
        <taxon>Metazoa</taxon>
        <taxon>Chordata</taxon>
        <taxon>Craniata</taxon>
        <taxon>Vertebrata</taxon>
        <taxon>Euteleostomi</taxon>
        <taxon>Mammalia</taxon>
        <taxon>Eutheria</taxon>
        <taxon>Euarchontoglires</taxon>
        <taxon>Glires</taxon>
        <taxon>Rodentia</taxon>
        <taxon>Myomorpha</taxon>
        <taxon>Muroidea</taxon>
        <taxon>Muridae</taxon>
        <taxon>Murinae</taxon>
        <taxon>Mus</taxon>
        <taxon>Mus</taxon>
    </lineage>
</organism>
<reference key="1">
    <citation type="journal article" date="2004" name="Genome Res.">
        <title>The status, quality, and expansion of the NIH full-length cDNA project: the Mammalian Gene Collection (MGC).</title>
        <authorList>
            <consortium name="The MGC Project Team"/>
        </authorList>
    </citation>
    <scope>NUCLEOTIDE SEQUENCE [LARGE SCALE MRNA]</scope>
    <source>
        <strain>C57BL/6J</strain>
        <tissue>Embryo</tissue>
        <tissue>Kidney</tissue>
    </source>
</reference>
<reference key="2">
    <citation type="journal article" date="2005" name="Science">
        <title>The transcriptional landscape of the mammalian genome.</title>
        <authorList>
            <person name="Carninci P."/>
            <person name="Kasukawa T."/>
            <person name="Katayama S."/>
            <person name="Gough J."/>
            <person name="Frith M.C."/>
            <person name="Maeda N."/>
            <person name="Oyama R."/>
            <person name="Ravasi T."/>
            <person name="Lenhard B."/>
            <person name="Wells C."/>
            <person name="Kodzius R."/>
            <person name="Shimokawa K."/>
            <person name="Bajic V.B."/>
            <person name="Brenner S.E."/>
            <person name="Batalov S."/>
            <person name="Forrest A.R."/>
            <person name="Zavolan M."/>
            <person name="Davis M.J."/>
            <person name="Wilming L.G."/>
            <person name="Aidinis V."/>
            <person name="Allen J.E."/>
            <person name="Ambesi-Impiombato A."/>
            <person name="Apweiler R."/>
            <person name="Aturaliya R.N."/>
            <person name="Bailey T.L."/>
            <person name="Bansal M."/>
            <person name="Baxter L."/>
            <person name="Beisel K.W."/>
            <person name="Bersano T."/>
            <person name="Bono H."/>
            <person name="Chalk A.M."/>
            <person name="Chiu K.P."/>
            <person name="Choudhary V."/>
            <person name="Christoffels A."/>
            <person name="Clutterbuck D.R."/>
            <person name="Crowe M.L."/>
            <person name="Dalla E."/>
            <person name="Dalrymple B.P."/>
            <person name="de Bono B."/>
            <person name="Della Gatta G."/>
            <person name="di Bernardo D."/>
            <person name="Down T."/>
            <person name="Engstrom P."/>
            <person name="Fagiolini M."/>
            <person name="Faulkner G."/>
            <person name="Fletcher C.F."/>
            <person name="Fukushima T."/>
            <person name="Furuno M."/>
            <person name="Futaki S."/>
            <person name="Gariboldi M."/>
            <person name="Georgii-Hemming P."/>
            <person name="Gingeras T.R."/>
            <person name="Gojobori T."/>
            <person name="Green R.E."/>
            <person name="Gustincich S."/>
            <person name="Harbers M."/>
            <person name="Hayashi Y."/>
            <person name="Hensch T.K."/>
            <person name="Hirokawa N."/>
            <person name="Hill D."/>
            <person name="Huminiecki L."/>
            <person name="Iacono M."/>
            <person name="Ikeo K."/>
            <person name="Iwama A."/>
            <person name="Ishikawa T."/>
            <person name="Jakt M."/>
            <person name="Kanapin A."/>
            <person name="Katoh M."/>
            <person name="Kawasawa Y."/>
            <person name="Kelso J."/>
            <person name="Kitamura H."/>
            <person name="Kitano H."/>
            <person name="Kollias G."/>
            <person name="Krishnan S.P."/>
            <person name="Kruger A."/>
            <person name="Kummerfeld S.K."/>
            <person name="Kurochkin I.V."/>
            <person name="Lareau L.F."/>
            <person name="Lazarevic D."/>
            <person name="Lipovich L."/>
            <person name="Liu J."/>
            <person name="Liuni S."/>
            <person name="McWilliam S."/>
            <person name="Madan Babu M."/>
            <person name="Madera M."/>
            <person name="Marchionni L."/>
            <person name="Matsuda H."/>
            <person name="Matsuzawa S."/>
            <person name="Miki H."/>
            <person name="Mignone F."/>
            <person name="Miyake S."/>
            <person name="Morris K."/>
            <person name="Mottagui-Tabar S."/>
            <person name="Mulder N."/>
            <person name="Nakano N."/>
            <person name="Nakauchi H."/>
            <person name="Ng P."/>
            <person name="Nilsson R."/>
            <person name="Nishiguchi S."/>
            <person name="Nishikawa S."/>
            <person name="Nori F."/>
            <person name="Ohara O."/>
            <person name="Okazaki Y."/>
            <person name="Orlando V."/>
            <person name="Pang K.C."/>
            <person name="Pavan W.J."/>
            <person name="Pavesi G."/>
            <person name="Pesole G."/>
            <person name="Petrovsky N."/>
            <person name="Piazza S."/>
            <person name="Reed J."/>
            <person name="Reid J.F."/>
            <person name="Ring B.Z."/>
            <person name="Ringwald M."/>
            <person name="Rost B."/>
            <person name="Ruan Y."/>
            <person name="Salzberg S.L."/>
            <person name="Sandelin A."/>
            <person name="Schneider C."/>
            <person name="Schoenbach C."/>
            <person name="Sekiguchi K."/>
            <person name="Semple C.A."/>
            <person name="Seno S."/>
            <person name="Sessa L."/>
            <person name="Sheng Y."/>
            <person name="Shibata Y."/>
            <person name="Shimada H."/>
            <person name="Shimada K."/>
            <person name="Silva D."/>
            <person name="Sinclair B."/>
            <person name="Sperling S."/>
            <person name="Stupka E."/>
            <person name="Sugiura K."/>
            <person name="Sultana R."/>
            <person name="Takenaka Y."/>
            <person name="Taki K."/>
            <person name="Tammoja K."/>
            <person name="Tan S.L."/>
            <person name="Tang S."/>
            <person name="Taylor M.S."/>
            <person name="Tegner J."/>
            <person name="Teichmann S.A."/>
            <person name="Ueda H.R."/>
            <person name="van Nimwegen E."/>
            <person name="Verardo R."/>
            <person name="Wei C.L."/>
            <person name="Yagi K."/>
            <person name="Yamanishi H."/>
            <person name="Zabarovsky E."/>
            <person name="Zhu S."/>
            <person name="Zimmer A."/>
            <person name="Hide W."/>
            <person name="Bult C."/>
            <person name="Grimmond S.M."/>
            <person name="Teasdale R.D."/>
            <person name="Liu E.T."/>
            <person name="Brusic V."/>
            <person name="Quackenbush J."/>
            <person name="Wahlestedt C."/>
            <person name="Mattick J.S."/>
            <person name="Hume D.A."/>
            <person name="Kai C."/>
            <person name="Sasaki D."/>
            <person name="Tomaru Y."/>
            <person name="Fukuda S."/>
            <person name="Kanamori-Katayama M."/>
            <person name="Suzuki M."/>
            <person name="Aoki J."/>
            <person name="Arakawa T."/>
            <person name="Iida J."/>
            <person name="Imamura K."/>
            <person name="Itoh M."/>
            <person name="Kato T."/>
            <person name="Kawaji H."/>
            <person name="Kawagashira N."/>
            <person name="Kawashima T."/>
            <person name="Kojima M."/>
            <person name="Kondo S."/>
            <person name="Konno H."/>
            <person name="Nakano K."/>
            <person name="Ninomiya N."/>
            <person name="Nishio T."/>
            <person name="Okada M."/>
            <person name="Plessy C."/>
            <person name="Shibata K."/>
            <person name="Shiraki T."/>
            <person name="Suzuki S."/>
            <person name="Tagami M."/>
            <person name="Waki K."/>
            <person name="Watahiki A."/>
            <person name="Okamura-Oho Y."/>
            <person name="Suzuki H."/>
            <person name="Kawai J."/>
            <person name="Hayashizaki Y."/>
        </authorList>
    </citation>
    <scope>NUCLEOTIDE SEQUENCE [LARGE SCALE MRNA] OF 2211-2565</scope>
    <source>
        <strain>C57BL/6J</strain>
        <tissue>Head</tissue>
    </source>
</reference>
<reference key="3">
    <citation type="journal article" date="2001" name="Nat. Genet.">
        <title>Disruption of Trrap causes early embryonic lethality and defects in cell cycle progression.</title>
        <authorList>
            <person name="Herceg Z."/>
            <person name="Hulla W."/>
            <person name="Gell D."/>
            <person name="Cuenin C."/>
            <person name="Lleonart M."/>
            <person name="Jackson S."/>
            <person name="Wang Z.-Q."/>
        </authorList>
    </citation>
    <scope>FUNCTION</scope>
</reference>
<reference key="4">
    <citation type="journal article" date="2010" name="Cell">
        <title>A tissue-specific atlas of mouse protein phosphorylation and expression.</title>
        <authorList>
            <person name="Huttlin E.L."/>
            <person name="Jedrychowski M.P."/>
            <person name="Elias J.E."/>
            <person name="Goswami T."/>
            <person name="Rad R."/>
            <person name="Beausoleil S.A."/>
            <person name="Villen J."/>
            <person name="Haas W."/>
            <person name="Sowa M.E."/>
            <person name="Gygi S.P."/>
        </authorList>
    </citation>
    <scope>IDENTIFICATION BY MASS SPECTROMETRY [LARGE SCALE ANALYSIS]</scope>
    <source>
        <tissue>Brain</tissue>
        <tissue>Brown adipose tissue</tissue>
        <tissue>Kidney</tissue>
        <tissue>Liver</tissue>
        <tissue>Lung</tissue>
        <tissue>Spleen</tissue>
        <tissue>Testis</tissue>
    </source>
</reference>
<reference key="5">
    <citation type="journal article" date="2019" name="Clin. Genet.">
        <title>Novel TRRAP mutation causes autosomal dominant non-syndromic hearing loss.</title>
        <authorList>
            <person name="Xia W."/>
            <person name="Hu J."/>
            <person name="Ma J."/>
            <person name="Huang J."/>
            <person name="Wang X."/>
            <person name="Jiang N."/>
            <person name="Zhang J."/>
            <person name="Ma Z."/>
            <person name="Ma D."/>
        </authorList>
    </citation>
    <scope>TISSUE SPECIFICITY</scope>
</reference>
<evidence type="ECO:0000250" key="1"/>
<evidence type="ECO:0000250" key="2">
    <source>
        <dbReference type="UniProtKB" id="A0A0R4ITC5"/>
    </source>
</evidence>
<evidence type="ECO:0000250" key="3">
    <source>
        <dbReference type="UniProtKB" id="Q9Y4A5"/>
    </source>
</evidence>
<evidence type="ECO:0000255" key="4"/>
<evidence type="ECO:0000255" key="5">
    <source>
        <dbReference type="PROSITE-ProRule" id="PRU00269"/>
    </source>
</evidence>
<evidence type="ECO:0000255" key="6">
    <source>
        <dbReference type="PROSITE-ProRule" id="PRU00534"/>
    </source>
</evidence>
<evidence type="ECO:0000255" key="7">
    <source>
        <dbReference type="PROSITE-ProRule" id="PRU00535"/>
    </source>
</evidence>
<evidence type="ECO:0000256" key="8">
    <source>
        <dbReference type="SAM" id="MobiDB-lite"/>
    </source>
</evidence>
<evidence type="ECO:0000269" key="9">
    <source>
    </source>
</evidence>
<evidence type="ECO:0000269" key="10">
    <source>
    </source>
</evidence>
<evidence type="ECO:0000305" key="11"/>
<protein>
    <recommendedName>
        <fullName>Transformation/transcription domain-associated protein</fullName>
    </recommendedName>
    <alternativeName>
        <fullName>Tra1 homolog</fullName>
    </alternativeName>
</protein>
<comment type="function">
    <text evidence="2 9">Adapter protein, which is found in various multiprotein chromatin complexes with histone acetyltransferase activity (HAT), which gives a specific tag for epigenetic transcription activation. Component of the NuA4 histone acetyltransferase complex which is responsible for acetylation of nucleosomal histones H4 and H2A. Plays a central role in MYC transcription activation, and also participates in cell transformation by MYC. Required for p53/TP53-, E2F1- and E2F4-mediated transcription activation. Probably acts by linking transcription factors such as E1A, MYC or E2F1 to HAT complexes such as STAGA thereby allowing transcription activation. Probably not required in the steps following histone acetylation in processes of transcription activation. May be required for the mitotic checkpoint and normal cell cycle progression. Component of a SWR1-like complex that specifically mediates the removal of histone H2A.Z/H2AZ1 from the nucleosome. May play a role in the formation and maintenance of the auditory system (By similarity).</text>
</comment>
<comment type="subunit">
    <text evidence="1">Interacts with MYC, E2F1 and E2F4 transcription factors. Interacts directly with p53/TP53. Interacts with GCN5L2. Component of various HAT complexes. Component of the PCAF complex, at least composed of TADA2L/ADA2, SUPT3H, TADA3L/ADA3, TAF5L/PAF65-beta, TAF6L/PAF65-alpha, TAF10/TAFII30, TAF12/TAFII20, TAF9/TAFII31 and TRRAP. Component of the TFTC-HAT complex, at least composed of TAF5L, TAF6L, TADA3L, SUPT3H/SPT3, TAF2/TAFII150, TAF4/TAFII135, TAF5/TAFII100, GCN5L2/GCN5, TAF10 and TRRAP. Component of the NuA4 histone acetyltransferase complex which contains the catalytic subunit KAT5/TIP60 and the subunits EP400, TRRAP/PAF400, BRD8/SMAP, EPC1, DMAP1/DNMAP1, RUVBL1/TIP49, RUVBL2, ING3, actin, ACTL6A/BAF53A, MORF4L1/MRG15, MORF4L2/MRGX, MRGBP, YEATS4/GAS41, VPS72/YL1 and MEAF6. Component of the STAGA complex, at least composed of SUPT3H, GCN5L2, SUPT7L, TAF5L, TAF6L, TADA3L, TAD1L, TAF10, TAF12, TRRAP and TAF9. The STAGA core complex is associated with a subcomplex required for histone deubiquitination composed of ATXN7L3, ENY2 and USP22. Component of the BAF53 complex, at least composed of BAF53A, RUVBL1, SMARCA4/BRG1, and TRRAP, which preferentially acetylates histone H4 (and H2A) within nucleosomes. Interacts with NPAT (By similarity). Interaction with TELO2 and TTI1. Component of a SWR1-like complex (By similarity).</text>
</comment>
<comment type="interaction">
    <interactant intactId="EBI-2942477">
        <id>Q80YV3</id>
    </interactant>
    <interactant intactId="EBI-7990748">
        <id>Q8R4I1</id>
        <label>Atxn7</label>
    </interactant>
    <organismsDiffer>false</organismsDiffer>
    <experiments>3</experiments>
</comment>
<comment type="interaction">
    <interactant intactId="EBI-2942477">
        <id>Q80YV3</id>
    </interactant>
    <interactant intactId="EBI-2943116">
        <id>Q9JHD2</id>
        <label>Kat2a</label>
    </interactant>
    <organismsDiffer>false</organismsDiffer>
    <experiments>4</experiments>
</comment>
<comment type="subcellular location">
    <subcellularLocation>
        <location evidence="1">Nucleus</location>
    </subcellularLocation>
</comment>
<comment type="tissue specificity">
    <text evidence="10">Expressed in the cochlea.</text>
</comment>
<comment type="domain">
    <text evidence="1">The PI3K/PI4K domain is required for the recruitment of HAT complexes, and the MYC-dependent transactivation. Although it is strongly related to the PI3/PI4-kinase family, it lacks the typical motifs that constitute the catalytic site of PI3/PI4-kinase proteins, and lacks such activity (By similarity).</text>
</comment>
<comment type="similarity">
    <text evidence="11">Belongs to the PI3/PI4-kinase family. TRA1 subfamily.</text>
</comment>
<feature type="chain" id="PRO_0000088852" description="Transformation/transcription domain-associated protein">
    <location>
        <begin position="1"/>
        <end position="2565"/>
    </location>
</feature>
<feature type="domain" description="FAT" evidence="6">
    <location>
        <begin position="1391"/>
        <end position="1963"/>
    </location>
</feature>
<feature type="domain" description="PI3K/PI4K catalytic" evidence="5">
    <location>
        <begin position="2206"/>
        <end position="2529"/>
    </location>
</feature>
<feature type="domain" description="FATC" evidence="6 7">
    <location>
        <begin position="2533"/>
        <end position="2565"/>
    </location>
</feature>
<feature type="region of interest" description="Interaction with TP53" evidence="1">
    <location>
        <begin position="710"/>
        <end position="1087"/>
    </location>
</feature>
<feature type="region of interest" description="Disordered" evidence="8">
    <location>
        <begin position="1242"/>
        <end position="1277"/>
    </location>
</feature>
<feature type="region of interest" description="Disordered" evidence="8">
    <location>
        <begin position="1973"/>
        <end position="1995"/>
    </location>
</feature>
<feature type="region of interest" description="G-loop" evidence="5">
    <location>
        <begin position="2212"/>
        <end position="2218"/>
    </location>
</feature>
<feature type="region of interest" description="Catalytic loop" evidence="5">
    <location>
        <begin position="2393"/>
        <end position="2401"/>
    </location>
</feature>
<feature type="region of interest" description="Activation loop" evidence="5">
    <location>
        <begin position="2413"/>
        <end position="2438"/>
    </location>
</feature>
<feature type="short sequence motif" description="Bipartite nuclear localization signal" evidence="4">
    <location>
        <begin position="745"/>
        <end position="760"/>
    </location>
</feature>
<feature type="compositionally biased region" description="Basic and acidic residues" evidence="8">
    <location>
        <begin position="1242"/>
        <end position="1253"/>
    </location>
</feature>
<feature type="compositionally biased region" description="Polar residues" evidence="8">
    <location>
        <begin position="1975"/>
        <end position="1991"/>
    </location>
</feature>
<feature type="modified residue" description="Phosphoserine" evidence="3">
    <location>
        <position position="328"/>
    </location>
</feature>
<feature type="modified residue" description="Phosphoserine" evidence="3">
    <location>
        <position position="749"/>
    </location>
</feature>
<feature type="modified residue" description="Phosphoserine" evidence="3">
    <location>
        <position position="775"/>
    </location>
</feature>
<feature type="modified residue" description="N6-acetyllysine" evidence="3">
    <location>
        <position position="1766"/>
    </location>
</feature>
<feature type="cross-link" description="Glycyl lysine isopeptide (Lys-Gly) (interchain with G-Cter in SUMO2)" evidence="3">
    <location>
        <position position="1242"/>
    </location>
</feature>
<gene>
    <name type="primary">Trrap</name>
</gene>
<sequence>MTRKFVKRSIFLHLLRHQPANAQIGLMEGNTFCTTLQPRLFTMDLNVVEHKVFYTELLNLCEAEDSALTKLPCYKSLPSLVPLRIAALNALAACNYLPQSREKIIAALFKALNSTNSELQEAGEACMRKFLEGATIEVDQIHTHMRPLLMMLGDYRSLTLNVVNRLTSVTRLFPNSFNDKFCDQMMQHLRKWMEVVVITHKGGQRSDGNEMKICSAIINLFHLIPAAPQTLVKPPLEVVMETERAMLIEAGSPFREPLIKFLTRHPSQTVELFMMGATLNDPQWSRMFMSFLKHKDARPLRDVLAANPNRFITLLLPGGAQTAVRPGSSSTSNMRLDLQFQAIKIISIIVKNDDAWLASQHSLVSQLRRVWVSETFQERHRKENMAATNWKEPKLLAFCLLNYCKRNYGDIELLFQLLRAFTGRFLCNMTFLKEYMEEEIPKNYSIAQKRALFFRFVEFNDPNFGDELKAKVLQHILNPAFLYSFEKGEGEQLLGPPNPEGDNPESITSVFITKVLDPEKQADMLDSLRIYLLQYATLLVEHAPHHIHDNNKNRNSKLRRLMTFAWPCLLSKACVDPACRYSGHLLLAHIIAKFAIHKKIVLQVFHSLLKAHAMEARAIVRQAMAILTPAVPARMEDGHQMLTHWTRKIIVEEGHTVPQLVHILHPIVQHFKVYYPVRHHLVQHMVSAMQRLGFTPSVTIEQRRLAVDLSEVVIKWELQRIKDQQPDSDMDPNSSGEGVNSVSIKRGLSVDSAQEVKRFRAATGAISAVFGRSQSLPGADSLLAKPIDKQHTDTVVNFLIRVACQVNDNTNTAGSPGEVLSRRCVNLLKTALRPDMWCKSELKLQWFDKLLMTVEQPNQVNYGNICTGLEVLNFLLTVLQSPAILSSFKPLQRGIAACMTCGNTKVLRAVHSLLSRLMSIFPTEPSTSSVASKYEELECLYAAVGKVIYEGLTNYEKATSANPSQLFGTLMIHKSACCNNPSYIDRLISVFMRSLQKMVREHLNPQTASGSTEATAAGTSELVMLSLDLVKTRLAVMSMEMRKNFIQTILTSLIEKSPDAKILRAVVKIVEEWVKNNSPMAANQTPTLREKSILLVKMMTYIEKRFPEDLELNAQFLDLVNYVYRDEALSGSELTAKLEPAFLSGLRCAQPLIRAKFFEVFDNSMKRRVYERLLYVTCSQNWEAMGSHFWIKQCIELLLAVCEKSTAIGTSCQGAMLPSITNVINLADSHDRAAFAMVTHVKQEPRERENSESKEEDVEIDIELAPGDQTSTPKTKELSEKDIGNQLHMLTNRHDKFLDTLREVKTGALLSAFVQLCHISTTLAEKTWVQLFPRLWKILSDRQQHALAGEISPFLCSGSHQVQRDCQPSALNCFVEAMSQCVPPIPMRPCVLKYLGKTHNLWFRSTLMLEHQAFEKGLSLPIKPKQTTEFYEQESITPPQQEILDSLAELYSLLQEEDMWAGLWQKRCKFSETATAIAYEQHGFFEQAQESYEKAMDKAKKEHERSNASPAIFPEYQLWEDHWIRCSKELNQWEALTEFGQSKGHINPYLVLECAWRVSNWTAMKEALVQVEVSCPKEMAWKVNMYRGYLAICHPEEQQLSFIERLVEMASSLAIREWRRLPHVVSHVHTPLLQAAQQIIELQEAAQINAGLQPTNLGRNNSLHDMKTVVKTWRNRLPIVSDDLSHWSSVFMWRQHHYQAIVTAYENSSHHDPSSNNAMLGVHASASAIIQYGKIARKQGLVNVALDILSRIHTIPTVPIVDCFQKIRQQVKCYLQLAGVMGKNECMQGLEVIESTNLKYFTKEMTAEFYALKGMFLAQINKSEEANKAFSAAVQMHDVLVKAWAMWGDYLESIFVKERQLHLGVSAITCYLHACRHQNESKSRKYLAKVLWLLSFDDDKNTLADAVDKYCIGVPPIQWLAWIPQLLTCLVGSEGKLLLNLISQVGRVYPQAVYFPIRTLYLTLKIEQRERYKSDSGQQQPSSAGNQSHSASDPGPIRATAPMWRCSRIMHMQRELHPTLLSSLEGIVDQMVWFRENWHEEVLRQLQQGLAKCYSVAFEKSGAVSDAKITPHTLNFVKKLVSTFGVGLENVSNVSTMFSSAASESLARRAQATAQDPVFQKLKGQFTTDFDFSVPGSMKLHNLISKLKKWIKILEAKTKQLPKFFLIEEKCRFLSNFSAQTAEVEIPGEFLMPKPTHYYIKIARFMPRVEIVQKHNTAARRLHIRGHNGKIYPYLVMNDACLTESRREERVLQLLRLLNPCLEKRKETTKRHLFFTVPRVVAVSPQMRLVEDNPSSLSLVEIYKQRCAKKGIEHDNPISRYYDRLATVQARGTQASHQVLRDILKEVQSNMVPRSMLKEWALHTFPNATDYWTFRKMFTIQLALIGFAEFVLHLNRLNPEMLQIAQDTGKLNVAYFRFDINDATGDLDANRPVPFRLTPNISEFLTTIGVSGPLTASMIAVARCFAQPNFKVDGVLKTVLRDEIIAWHKKTQEDTSSPLSAAGQPENMDSQQLVSLVQKAVTAIMTRLHNLAQFDGGESKVNTLVAAANSLDNLCRMDPAWHPWL</sequence>
<accession>Q80YV3</accession>
<accession>Q8C0Z5</accession>
<accession>Q8K104</accession>
<dbReference type="EMBL" id="BC029023">
    <property type="protein sequence ID" value="AAH29023.1"/>
    <property type="molecule type" value="mRNA"/>
</dbReference>
<dbReference type="EMBL" id="BC050105">
    <property type="protein sequence ID" value="AAH50105.1"/>
    <property type="molecule type" value="mRNA"/>
</dbReference>
<dbReference type="EMBL" id="AK029388">
    <property type="protein sequence ID" value="BAC26431.1"/>
    <property type="molecule type" value="mRNA"/>
</dbReference>
<dbReference type="SMR" id="Q80YV3"/>
<dbReference type="ComplexPortal" id="CPX-1024">
    <property type="entry name" value="PCAF histone acetylase complex"/>
</dbReference>
<dbReference type="ComplexPortal" id="CPX-6803">
    <property type="entry name" value="SAGA complex, KAT2B variant"/>
</dbReference>
<dbReference type="ComplexPortal" id="CPX-916">
    <property type="entry name" value="TFTC histone acetylation complex"/>
</dbReference>
<dbReference type="ComplexPortal" id="CPX-920">
    <property type="entry name" value="SAGA complex, KAT2A variant"/>
</dbReference>
<dbReference type="ComplexPortal" id="CPX-990">
    <property type="entry name" value="NuA4 histone acetyltransferase complex"/>
</dbReference>
<dbReference type="DIP" id="DIP-29177N"/>
<dbReference type="FunCoup" id="Q80YV3">
    <property type="interactions" value="1827"/>
</dbReference>
<dbReference type="IntAct" id="Q80YV3">
    <property type="interactions" value="26"/>
</dbReference>
<dbReference type="MINT" id="Q80YV3"/>
<dbReference type="STRING" id="10090.ENSMUSP00000098035"/>
<dbReference type="GlyGen" id="Q80YV3">
    <property type="glycosylation" value="1 site, 1 O-linked glycan (1 site)"/>
</dbReference>
<dbReference type="iPTMnet" id="Q80YV3"/>
<dbReference type="PhosphoSitePlus" id="Q80YV3"/>
<dbReference type="jPOST" id="Q80YV3"/>
<dbReference type="PaxDb" id="10090-ENSMUSP00000098035"/>
<dbReference type="PeptideAtlas" id="Q80YV3"/>
<dbReference type="ProteomicsDB" id="300029"/>
<dbReference type="Pumba" id="Q80YV3"/>
<dbReference type="AGR" id="MGI:2153272"/>
<dbReference type="MGI" id="MGI:2153272">
    <property type="gene designation" value="Trrap"/>
</dbReference>
<dbReference type="eggNOG" id="KOG0889">
    <property type="taxonomic scope" value="Eukaryota"/>
</dbReference>
<dbReference type="InParanoid" id="Q80YV3"/>
<dbReference type="PhylomeDB" id="Q80YV3"/>
<dbReference type="Reactome" id="R-MMU-201722">
    <property type="pathway name" value="Formation of the beta-catenin:TCF transactivating complex"/>
</dbReference>
<dbReference type="Reactome" id="R-MMU-5689880">
    <property type="pathway name" value="Ub-specific processing proteases"/>
</dbReference>
<dbReference type="ChiTaRS" id="Trrap">
    <property type="organism name" value="mouse"/>
</dbReference>
<dbReference type="PRO" id="PR:Q80YV3"/>
<dbReference type="Proteomes" id="UP000000589">
    <property type="component" value="Unplaced"/>
</dbReference>
<dbReference type="RNAct" id="Q80YV3">
    <property type="molecule type" value="protein"/>
</dbReference>
<dbReference type="GO" id="GO:0000123">
    <property type="term" value="C:histone acetyltransferase complex"/>
    <property type="evidence" value="ECO:0000304"/>
    <property type="project" value="MGI"/>
</dbReference>
<dbReference type="GO" id="GO:0035267">
    <property type="term" value="C:NuA4 histone acetyltransferase complex"/>
    <property type="evidence" value="ECO:0000250"/>
    <property type="project" value="UniProtKB"/>
</dbReference>
<dbReference type="GO" id="GO:0000786">
    <property type="term" value="C:nucleosome"/>
    <property type="evidence" value="ECO:0000266"/>
    <property type="project" value="ComplexPortal"/>
</dbReference>
<dbReference type="GO" id="GO:0000124">
    <property type="term" value="C:SAGA complex"/>
    <property type="evidence" value="ECO:0000314"/>
    <property type="project" value="MGI"/>
</dbReference>
<dbReference type="GO" id="GO:0000812">
    <property type="term" value="C:Swr1 complex"/>
    <property type="evidence" value="ECO:0000250"/>
    <property type="project" value="UniProtKB"/>
</dbReference>
<dbReference type="GO" id="GO:0033276">
    <property type="term" value="C:transcription factor TFTC complex"/>
    <property type="evidence" value="ECO:0000303"/>
    <property type="project" value="ComplexPortal"/>
</dbReference>
<dbReference type="GO" id="GO:0005667">
    <property type="term" value="C:transcription regulator complex"/>
    <property type="evidence" value="ECO:0000314"/>
    <property type="project" value="MGI"/>
</dbReference>
<dbReference type="GO" id="GO:0003713">
    <property type="term" value="F:transcription coactivator activity"/>
    <property type="evidence" value="ECO:0000314"/>
    <property type="project" value="MGI"/>
</dbReference>
<dbReference type="GO" id="GO:0006325">
    <property type="term" value="P:chromatin organization"/>
    <property type="evidence" value="ECO:0007669"/>
    <property type="project" value="UniProtKB-KW"/>
</dbReference>
<dbReference type="GO" id="GO:0045893">
    <property type="term" value="P:positive regulation of DNA-templated transcription"/>
    <property type="evidence" value="ECO:0000303"/>
    <property type="project" value="ComplexPortal"/>
</dbReference>
<dbReference type="GO" id="GO:1905168">
    <property type="term" value="P:positive regulation of double-strand break repair via homologous recombination"/>
    <property type="evidence" value="ECO:0000266"/>
    <property type="project" value="ComplexPortal"/>
</dbReference>
<dbReference type="GO" id="GO:0042981">
    <property type="term" value="P:regulation of apoptotic process"/>
    <property type="evidence" value="ECO:0000303"/>
    <property type="project" value="ComplexPortal"/>
</dbReference>
<dbReference type="GO" id="GO:0051726">
    <property type="term" value="P:regulation of cell cycle"/>
    <property type="evidence" value="ECO:0000266"/>
    <property type="project" value="ComplexPortal"/>
</dbReference>
<dbReference type="GO" id="GO:0006282">
    <property type="term" value="P:regulation of DNA repair"/>
    <property type="evidence" value="ECO:0000303"/>
    <property type="project" value="ComplexPortal"/>
</dbReference>
<dbReference type="GO" id="GO:0006355">
    <property type="term" value="P:regulation of DNA-templated transcription"/>
    <property type="evidence" value="ECO:0000314"/>
    <property type="project" value="MGI"/>
</dbReference>
<dbReference type="GO" id="GO:2000779">
    <property type="term" value="P:regulation of double-strand break repair"/>
    <property type="evidence" value="ECO:0000303"/>
    <property type="project" value="ComplexPortal"/>
</dbReference>
<dbReference type="GO" id="GO:0043484">
    <property type="term" value="P:regulation of RNA splicing"/>
    <property type="evidence" value="ECO:0000303"/>
    <property type="project" value="ComplexPortal"/>
</dbReference>
<dbReference type="GO" id="GO:0006357">
    <property type="term" value="P:regulation of transcription by RNA polymerase II"/>
    <property type="evidence" value="ECO:0000266"/>
    <property type="project" value="ComplexPortal"/>
</dbReference>
<dbReference type="CDD" id="cd05163">
    <property type="entry name" value="PIKK_TRRAP"/>
    <property type="match status" value="1"/>
</dbReference>
<dbReference type="InterPro" id="IPR016024">
    <property type="entry name" value="ARM-type_fold"/>
</dbReference>
<dbReference type="InterPro" id="IPR050517">
    <property type="entry name" value="DDR_Repair_Kinase"/>
</dbReference>
<dbReference type="InterPro" id="IPR003152">
    <property type="entry name" value="FATC_dom"/>
</dbReference>
<dbReference type="InterPro" id="IPR011009">
    <property type="entry name" value="Kinase-like_dom_sf"/>
</dbReference>
<dbReference type="InterPro" id="IPR000403">
    <property type="entry name" value="PI3/4_kinase_cat_dom"/>
</dbReference>
<dbReference type="InterPro" id="IPR003151">
    <property type="entry name" value="PIK-rel_kinase_FAT"/>
</dbReference>
<dbReference type="InterPro" id="IPR014009">
    <property type="entry name" value="PIK_FAT"/>
</dbReference>
<dbReference type="InterPro" id="IPR046805">
    <property type="entry name" value="Tra1_ring"/>
</dbReference>
<dbReference type="PANTHER" id="PTHR11139">
    <property type="entry name" value="ATAXIA TELANGIECTASIA MUTATED ATM -RELATED"/>
    <property type="match status" value="1"/>
</dbReference>
<dbReference type="PANTHER" id="PTHR11139:SF1">
    <property type="entry name" value="TRANSFORMATION_TRANSCRIPTION DOMAIN-ASSOCIATED PROTEIN"/>
    <property type="match status" value="1"/>
</dbReference>
<dbReference type="Pfam" id="PF02259">
    <property type="entry name" value="FAT"/>
    <property type="match status" value="1"/>
</dbReference>
<dbReference type="Pfam" id="PF00454">
    <property type="entry name" value="PI3_PI4_kinase"/>
    <property type="match status" value="1"/>
</dbReference>
<dbReference type="Pfam" id="PF20206">
    <property type="entry name" value="Tra1_ring"/>
    <property type="match status" value="1"/>
</dbReference>
<dbReference type="SMART" id="SM01343">
    <property type="entry name" value="FATC"/>
    <property type="match status" value="1"/>
</dbReference>
<dbReference type="SMART" id="SM00146">
    <property type="entry name" value="PI3Kc"/>
    <property type="match status" value="1"/>
</dbReference>
<dbReference type="SUPFAM" id="SSF48371">
    <property type="entry name" value="ARM repeat"/>
    <property type="match status" value="1"/>
</dbReference>
<dbReference type="SUPFAM" id="SSF56112">
    <property type="entry name" value="Protein kinase-like (PK-like)"/>
    <property type="match status" value="1"/>
</dbReference>
<dbReference type="PROSITE" id="PS51189">
    <property type="entry name" value="FAT"/>
    <property type="match status" value="1"/>
</dbReference>
<dbReference type="PROSITE" id="PS51190">
    <property type="entry name" value="FATC"/>
    <property type="match status" value="1"/>
</dbReference>
<dbReference type="PROSITE" id="PS50290">
    <property type="entry name" value="PI3_4_KINASE_3"/>
    <property type="match status" value="1"/>
</dbReference>
<proteinExistence type="evidence at protein level"/>